<gene>
    <name evidence="1" type="primary">rdgC</name>
    <name type="ordered locus">Spro_1027</name>
</gene>
<feature type="chain" id="PRO_1000058516" description="Recombination-associated protein RdgC">
    <location>
        <begin position="1"/>
        <end position="303"/>
    </location>
</feature>
<comment type="function">
    <text evidence="1">May be involved in recombination.</text>
</comment>
<comment type="subcellular location">
    <subcellularLocation>
        <location evidence="1">Cytoplasm</location>
        <location evidence="1">Nucleoid</location>
    </subcellularLocation>
</comment>
<comment type="similarity">
    <text evidence="1">Belongs to the RdgC family.</text>
</comment>
<sequence>MLWFKNLMVYRLSREVALNADEMEKQLSAFAFTPCGSQDMAKTGWVSPMGSHSESLTHAVNGQIVICARKEEKILPSPVIKQELQAKIERLEGEQHRKLKKTEKDALKDEVLHSLLPRAFSRFNQTFMWIDTVNDLIMVDAASAKRAEDTLALLRKSLGSLPVVPLTMESPIELTLTEWVRSGELPAGFIIQDEAELKAILEDGGVIRCKKQNLISDEIAVHIEAGKLVTKLAVDWQERIQLVLADDGSLKRLKFADTLREQNDDIDRDDFAQRFDADFILMTSELAALIKNTIEALGGEAQR</sequence>
<organism>
    <name type="scientific">Serratia proteamaculans (strain 568)</name>
    <dbReference type="NCBI Taxonomy" id="399741"/>
    <lineage>
        <taxon>Bacteria</taxon>
        <taxon>Pseudomonadati</taxon>
        <taxon>Pseudomonadota</taxon>
        <taxon>Gammaproteobacteria</taxon>
        <taxon>Enterobacterales</taxon>
        <taxon>Yersiniaceae</taxon>
        <taxon>Serratia</taxon>
    </lineage>
</organism>
<proteinExistence type="inferred from homology"/>
<evidence type="ECO:0000255" key="1">
    <source>
        <dbReference type="HAMAP-Rule" id="MF_00194"/>
    </source>
</evidence>
<accession>A8GAJ1</accession>
<name>RDGC_SERP5</name>
<keyword id="KW-0963">Cytoplasm</keyword>
<keyword id="KW-0233">DNA recombination</keyword>
<dbReference type="EMBL" id="CP000826">
    <property type="protein sequence ID" value="ABV40131.1"/>
    <property type="molecule type" value="Genomic_DNA"/>
</dbReference>
<dbReference type="SMR" id="A8GAJ1"/>
<dbReference type="STRING" id="399741.Spro_1027"/>
<dbReference type="KEGG" id="spe:Spro_1027"/>
<dbReference type="eggNOG" id="COG2974">
    <property type="taxonomic scope" value="Bacteria"/>
</dbReference>
<dbReference type="HOGENOM" id="CLU_052038_1_1_6"/>
<dbReference type="OrthoDB" id="5290530at2"/>
<dbReference type="GO" id="GO:0043590">
    <property type="term" value="C:bacterial nucleoid"/>
    <property type="evidence" value="ECO:0007669"/>
    <property type="project" value="TreeGrafter"/>
</dbReference>
<dbReference type="GO" id="GO:0005737">
    <property type="term" value="C:cytoplasm"/>
    <property type="evidence" value="ECO:0007669"/>
    <property type="project" value="UniProtKB-UniRule"/>
</dbReference>
<dbReference type="GO" id="GO:0003690">
    <property type="term" value="F:double-stranded DNA binding"/>
    <property type="evidence" value="ECO:0007669"/>
    <property type="project" value="TreeGrafter"/>
</dbReference>
<dbReference type="GO" id="GO:0006310">
    <property type="term" value="P:DNA recombination"/>
    <property type="evidence" value="ECO:0007669"/>
    <property type="project" value="UniProtKB-UniRule"/>
</dbReference>
<dbReference type="GO" id="GO:0000018">
    <property type="term" value="P:regulation of DNA recombination"/>
    <property type="evidence" value="ECO:0007669"/>
    <property type="project" value="TreeGrafter"/>
</dbReference>
<dbReference type="HAMAP" id="MF_00194">
    <property type="entry name" value="RdgC"/>
    <property type="match status" value="1"/>
</dbReference>
<dbReference type="InterPro" id="IPR007476">
    <property type="entry name" value="RdgC"/>
</dbReference>
<dbReference type="NCBIfam" id="NF001460">
    <property type="entry name" value="PRK00321.1-1"/>
    <property type="match status" value="1"/>
</dbReference>
<dbReference type="NCBIfam" id="NF001462">
    <property type="entry name" value="PRK00321.1-3"/>
    <property type="match status" value="1"/>
</dbReference>
<dbReference type="NCBIfam" id="NF001464">
    <property type="entry name" value="PRK00321.1-5"/>
    <property type="match status" value="1"/>
</dbReference>
<dbReference type="PANTHER" id="PTHR38103">
    <property type="entry name" value="RECOMBINATION-ASSOCIATED PROTEIN RDGC"/>
    <property type="match status" value="1"/>
</dbReference>
<dbReference type="PANTHER" id="PTHR38103:SF1">
    <property type="entry name" value="RECOMBINATION-ASSOCIATED PROTEIN RDGC"/>
    <property type="match status" value="1"/>
</dbReference>
<dbReference type="Pfam" id="PF04381">
    <property type="entry name" value="RdgC"/>
    <property type="match status" value="1"/>
</dbReference>
<protein>
    <recommendedName>
        <fullName evidence="1">Recombination-associated protein RdgC</fullName>
    </recommendedName>
</protein>
<reference key="1">
    <citation type="submission" date="2007-09" db="EMBL/GenBank/DDBJ databases">
        <title>Complete sequence of chromosome of Serratia proteamaculans 568.</title>
        <authorList>
            <consortium name="US DOE Joint Genome Institute"/>
            <person name="Copeland A."/>
            <person name="Lucas S."/>
            <person name="Lapidus A."/>
            <person name="Barry K."/>
            <person name="Glavina del Rio T."/>
            <person name="Dalin E."/>
            <person name="Tice H."/>
            <person name="Pitluck S."/>
            <person name="Chain P."/>
            <person name="Malfatti S."/>
            <person name="Shin M."/>
            <person name="Vergez L."/>
            <person name="Schmutz J."/>
            <person name="Larimer F."/>
            <person name="Land M."/>
            <person name="Hauser L."/>
            <person name="Kyrpides N."/>
            <person name="Kim E."/>
            <person name="Taghavi S."/>
            <person name="Newman L."/>
            <person name="Vangronsveld J."/>
            <person name="van der Lelie D."/>
            <person name="Richardson P."/>
        </authorList>
    </citation>
    <scope>NUCLEOTIDE SEQUENCE [LARGE SCALE GENOMIC DNA]</scope>
    <source>
        <strain>568</strain>
    </source>
</reference>